<accession>Q9FFK8</accession>
<accession>F4K0S4</accession>
<dbReference type="EC" id="2.3.2.-"/>
<dbReference type="EMBL" id="AB005237">
    <property type="protein sequence ID" value="BAB09660.1"/>
    <property type="status" value="ALT_SEQ"/>
    <property type="molecule type" value="Genomic_DNA"/>
</dbReference>
<dbReference type="EMBL" id="CP002688">
    <property type="protein sequence ID" value="AED90905.2"/>
    <property type="molecule type" value="Genomic_DNA"/>
</dbReference>
<dbReference type="EMBL" id="AK228690">
    <property type="status" value="NOT_ANNOTATED_CDS"/>
    <property type="molecule type" value="mRNA"/>
</dbReference>
<dbReference type="RefSeq" id="NP_196185.4">
    <molecule id="Q9FFK8-1"/>
    <property type="nucleotide sequence ID" value="NM_120648.6"/>
</dbReference>
<dbReference type="BioGRID" id="15729">
    <property type="interactions" value="2"/>
</dbReference>
<dbReference type="FunCoup" id="Q9FFK8">
    <property type="interactions" value="3660"/>
</dbReference>
<dbReference type="STRING" id="3702.Q9FFK8"/>
<dbReference type="GlyGen" id="Q9FFK8">
    <property type="glycosylation" value="2 sites"/>
</dbReference>
<dbReference type="PaxDb" id="3702-AT5G05660.1"/>
<dbReference type="ProteomicsDB" id="249434">
    <molecule id="Q9FFK8-1"/>
</dbReference>
<dbReference type="EnsemblPlants" id="AT5G05660.1">
    <molecule id="Q9FFK8-1"/>
    <property type="protein sequence ID" value="AT5G05660.1"/>
    <property type="gene ID" value="AT5G05660"/>
</dbReference>
<dbReference type="GeneID" id="830450"/>
<dbReference type="Gramene" id="AT5G05660.1">
    <molecule id="Q9FFK8-1"/>
    <property type="protein sequence ID" value="AT5G05660.1"/>
    <property type="gene ID" value="AT5G05660"/>
</dbReference>
<dbReference type="KEGG" id="ath:AT5G05660"/>
<dbReference type="Araport" id="AT5G05660"/>
<dbReference type="TAIR" id="AT5G05660">
    <property type="gene designation" value="NFXL2"/>
</dbReference>
<dbReference type="eggNOG" id="KOG1952">
    <property type="taxonomic scope" value="Eukaryota"/>
</dbReference>
<dbReference type="HOGENOM" id="CLU_014224_0_0_1"/>
<dbReference type="InParanoid" id="Q9FFK8"/>
<dbReference type="OMA" id="KCQSVCH"/>
<dbReference type="UniPathway" id="UPA00143"/>
<dbReference type="PRO" id="PR:Q9FFK8"/>
<dbReference type="Proteomes" id="UP000006548">
    <property type="component" value="Chromosome 5"/>
</dbReference>
<dbReference type="ExpressionAtlas" id="Q9FFK8">
    <property type="expression patterns" value="baseline and differential"/>
</dbReference>
<dbReference type="GO" id="GO:0016020">
    <property type="term" value="C:membrane"/>
    <property type="evidence" value="ECO:0007669"/>
    <property type="project" value="UniProtKB-SubCell"/>
</dbReference>
<dbReference type="GO" id="GO:0005634">
    <property type="term" value="C:nucleus"/>
    <property type="evidence" value="ECO:0007669"/>
    <property type="project" value="UniProtKB-SubCell"/>
</dbReference>
<dbReference type="GO" id="GO:0003700">
    <property type="term" value="F:DNA-binding transcription factor activity"/>
    <property type="evidence" value="ECO:0007669"/>
    <property type="project" value="InterPro"/>
</dbReference>
<dbReference type="GO" id="GO:0016740">
    <property type="term" value="F:transferase activity"/>
    <property type="evidence" value="ECO:0007669"/>
    <property type="project" value="UniProtKB-KW"/>
</dbReference>
<dbReference type="GO" id="GO:0008270">
    <property type="term" value="F:zinc ion binding"/>
    <property type="evidence" value="ECO:0007669"/>
    <property type="project" value="UniProtKB-KW"/>
</dbReference>
<dbReference type="GO" id="GO:0016567">
    <property type="term" value="P:protein ubiquitination"/>
    <property type="evidence" value="ECO:0007669"/>
    <property type="project" value="UniProtKB-UniPathway"/>
</dbReference>
<dbReference type="GO" id="GO:0010310">
    <property type="term" value="P:regulation of hydrogen peroxide metabolic process"/>
    <property type="evidence" value="ECO:0000315"/>
    <property type="project" value="UniProtKB"/>
</dbReference>
<dbReference type="GO" id="GO:0009651">
    <property type="term" value="P:response to salt stress"/>
    <property type="evidence" value="ECO:0000315"/>
    <property type="project" value="UniProtKB"/>
</dbReference>
<dbReference type="GO" id="GO:0048511">
    <property type="term" value="P:rhythmic process"/>
    <property type="evidence" value="ECO:0007669"/>
    <property type="project" value="UniProtKB-KW"/>
</dbReference>
<dbReference type="CDD" id="cd06008">
    <property type="entry name" value="NF-X1-zinc-finger"/>
    <property type="match status" value="6"/>
</dbReference>
<dbReference type="CDD" id="cd16697">
    <property type="entry name" value="RING-CH-C4HC3_NFXL1"/>
    <property type="match status" value="1"/>
</dbReference>
<dbReference type="InterPro" id="IPR034078">
    <property type="entry name" value="NFX1_fam"/>
</dbReference>
<dbReference type="InterPro" id="IPR019786">
    <property type="entry name" value="Zinc_finger_PHD-type_CS"/>
</dbReference>
<dbReference type="InterPro" id="IPR000967">
    <property type="entry name" value="Znf_NFX1"/>
</dbReference>
<dbReference type="PANTHER" id="PTHR12360:SF1">
    <property type="entry name" value="NF-X1-TYPE ZINC FINGER PROTEIN NFXL1"/>
    <property type="match status" value="1"/>
</dbReference>
<dbReference type="PANTHER" id="PTHR12360">
    <property type="entry name" value="NUCLEAR TRANSCRIPTION FACTOR, X-BOX BINDING 1 NFX1"/>
    <property type="match status" value="1"/>
</dbReference>
<dbReference type="Pfam" id="PF01422">
    <property type="entry name" value="zf-NF-X1"/>
    <property type="match status" value="11"/>
</dbReference>
<dbReference type="SMART" id="SM00438">
    <property type="entry name" value="ZnF_NFX"/>
    <property type="match status" value="11"/>
</dbReference>
<dbReference type="PROSITE" id="PS00197">
    <property type="entry name" value="2FE2S_FER_1"/>
    <property type="match status" value="2"/>
</dbReference>
<dbReference type="PROSITE" id="PS01359">
    <property type="entry name" value="ZF_PHD_1"/>
    <property type="match status" value="1"/>
</dbReference>
<proteinExistence type="evidence at protein level"/>
<name>NFXL2_ARATH</name>
<reference key="1">
    <citation type="journal article" date="2011" name="PLoS ONE">
        <title>NFX1-LIKE2 (NFXL2) suppresses abscisic acid accumulation and stomatal closure in Arabidopsis thaliana.</title>
        <authorList>
            <person name="Lisso J."/>
            <person name="Schroeder F."/>
            <person name="Fisahn J."/>
            <person name="Muessig C."/>
        </authorList>
    </citation>
    <scope>NUCLEOTIDE SEQUENCE [MRNA] (ISOFORMS NFXL2-100; NFXL2-97 AND NFXL2-78)</scope>
    <scope>FUNCTION</scope>
    <scope>ALTERNATIVE SPLICING</scope>
    <scope>DISRUPTION PHENOTYPE</scope>
    <scope>SUBCELLULAR LOCATION</scope>
    <scope>INDUCTION</scope>
    <scope>TISSUE SPECIFICITY</scope>
</reference>
<reference key="2">
    <citation type="journal article" date="1997" name="DNA Res.">
        <title>Structural analysis of Arabidopsis thaliana chromosome 5. I. Sequence features of the 1.6 Mb regions covered by twenty physically assigned P1 clones.</title>
        <authorList>
            <person name="Sato S."/>
            <person name="Kotani H."/>
            <person name="Nakamura Y."/>
            <person name="Kaneko T."/>
            <person name="Asamizu E."/>
            <person name="Fukami M."/>
            <person name="Miyajima N."/>
            <person name="Tabata S."/>
        </authorList>
    </citation>
    <scope>NUCLEOTIDE SEQUENCE [LARGE SCALE GENOMIC DNA]</scope>
    <source>
        <strain>cv. Columbia</strain>
    </source>
</reference>
<reference key="3">
    <citation type="journal article" date="2017" name="Plant J.">
        <title>Araport11: a complete reannotation of the Arabidopsis thaliana reference genome.</title>
        <authorList>
            <person name="Cheng C.Y."/>
            <person name="Krishnakumar V."/>
            <person name="Chan A.P."/>
            <person name="Thibaud-Nissen F."/>
            <person name="Schobel S."/>
            <person name="Town C.D."/>
        </authorList>
    </citation>
    <scope>GENOME REANNOTATION</scope>
    <source>
        <strain>cv. Columbia</strain>
    </source>
</reference>
<reference key="4">
    <citation type="submission" date="2006-07" db="EMBL/GenBank/DDBJ databases">
        <title>Large-scale analysis of RIKEN Arabidopsis full-length (RAFL) cDNAs.</title>
        <authorList>
            <person name="Totoki Y."/>
            <person name="Seki M."/>
            <person name="Ishida J."/>
            <person name="Nakajima M."/>
            <person name="Enju A."/>
            <person name="Kamiya A."/>
            <person name="Narusaka M."/>
            <person name="Shin-i T."/>
            <person name="Nakagawa M."/>
            <person name="Sakamoto N."/>
            <person name="Oishi K."/>
            <person name="Kohara Y."/>
            <person name="Kobayashi M."/>
            <person name="Toyoda A."/>
            <person name="Sakaki Y."/>
            <person name="Sakurai T."/>
            <person name="Iida K."/>
            <person name="Akiyama K."/>
            <person name="Satou M."/>
            <person name="Toyoda T."/>
            <person name="Konagaya A."/>
            <person name="Carninci P."/>
            <person name="Kawai J."/>
            <person name="Hayashizaki Y."/>
            <person name="Shinozaki K."/>
        </authorList>
    </citation>
    <scope>NUCLEOTIDE SEQUENCE [LARGE SCALE MRNA] OF 3-883 (ISOFORM NFXL2-97)</scope>
    <source>
        <strain>cv. Columbia</strain>
    </source>
</reference>
<reference key="5">
    <citation type="journal article" date="2006" name="FEBS Lett.">
        <title>The AtNFXL1 gene encodes a NF-X1 type zinc finger protein required for growth under salt stress.</title>
        <authorList>
            <person name="Lisso J."/>
            <person name="Altmann T."/>
            <person name="Muessig C."/>
        </authorList>
    </citation>
    <scope>FUNCTION</scope>
    <scope>DISRUPTION PHENOTYPE</scope>
    <scope>ALTERNATIVE SPLICING</scope>
</reference>
<reference key="6">
    <citation type="journal article" date="2010" name="Plant Biol.">
        <title>Structure and putative function of NFX1-like proteins in plants.</title>
        <authorList>
            <person name="Muessig C."/>
            <person name="Schroeder F."/>
            <person name="Usadel B."/>
            <person name="Lisso J."/>
        </authorList>
    </citation>
    <scope>REVIEW</scope>
</reference>
<reference key="7">
    <citation type="journal article" date="2011" name="Genome Biol.">
        <title>Full genome re-sequencing reveals a novel circadian clock mutation in Arabidopsis.</title>
        <authorList>
            <person name="Ashelford K."/>
            <person name="Eriksson M.E."/>
            <person name="Allen C.M."/>
            <person name="D'Amore R."/>
            <person name="Johansson M."/>
            <person name="Gould P."/>
            <person name="Kay S."/>
            <person name="Millar A.J."/>
            <person name="Hall N."/>
            <person name="Hall A."/>
        </authorList>
    </citation>
    <scope>FUNCTION</scope>
    <scope>MUTAGENESIS OF VAL-354</scope>
    <source>
        <strain>cv. Wassilewskija</strain>
    </source>
</reference>
<reference key="8">
    <citation type="journal article" date="2011" name="Plant Physiol.">
        <title>Partners in time: EARLY BIRD associates with ZEITLUPE and regulates the speed of the Arabidopsis clock.</title>
        <authorList>
            <person name="Johansson M."/>
            <person name="McWatters H.G."/>
            <person name="Bako L."/>
            <person name="Takata N."/>
            <person name="Gyula P."/>
            <person name="Hall A."/>
            <person name="Somers D.E."/>
            <person name="Millar A.J."/>
            <person name="Eriksson M.E."/>
        </authorList>
    </citation>
    <scope>FUNCTION</scope>
    <scope>INDUCTION</scope>
    <scope>INTERACTION WITH ADO1/ZTL</scope>
</reference>
<reference key="9">
    <citation type="journal article" date="2012" name="Plant Signal. Behav.">
        <title>NFXL2 modifies cuticle properties in Arabidopsis.</title>
        <authorList>
            <person name="Lisso J."/>
            <person name="Schroeder F."/>
            <person name="Schippers J.H."/>
            <person name="Muessig C."/>
        </authorList>
    </citation>
    <scope>FUNCTION</scope>
</reference>
<gene>
    <name type="primary">NFXL2</name>
    <name type="synonym">EBI</name>
    <name type="ordered locus">At5g05660</name>
    <name type="ORF">MJJ3.6</name>
</gene>
<sequence length="883" mass="99229">MTNMAGTATTEFRWKSPPQPPSQEQPISDSDSDSGSDSENHQHRHNDLSNSIFEAYLDCHSSSSPSSIDLAKIQSFLASSSSGAVSCLICLERIKRTDPTWSCTSSCFAVFHLFCIQSWARQCLDLQAARAVTRPSSNPTEPEAVWNCPKCRSSYQKSKIPRRYLCYCGKEEDPPADNPWILPHSCGEVCERPLSNNCGHCCLLLCHPGPCASCPKLVKAKCFCGGVEDVRRCGHKQFSCGDVCERVLDCNIHNCREICHDGECPPCRERAVYKCSCGKVKEEKDCCERVFRCEASCENMLNCGKHVCERGCHAGECGLCPYQGKRSCPCGKRFYQGLSCDVVAPLCGGTCDKVLGCGYHRCPERCHRGPCLETCRIVVTKSCRCGVTKKQVPCHQELACERKCQRVRDCARHACRRRCCDGECPPCSEICGKKLRCRNHKCQSPCHQGPCAPCPIMVTISCACGETHFEVPCGTETNQKPPRCRKLCHITPLCRHGQNQKPHKCHYGACPPCRLLCDEEYPCGHKCKLRCHGPRPPPNREFILKPTKKMLHIQAESTPGSPCPRCPEPVWRPCVGHHLAAEKRMICSDRTQFACDNLCGNPLPCGNHYCSYFCHALDIRSSSLDKRSESCEKCDLRCQKERTPRCQHPCPRRCHPEDCPPCKTLVKRSCHCGAMVHAFECIYYNTMSEKDQMKARSCRGPCHRKLPNCTHLCPEICHPGQCPLPEKCGKKVVVRCKCLTLKKEWVCQDVQAAHRATGSDPKEVPKNQFGVGLLPCDSNCKSKLQVAESVLTQRNVKEIEEKEEPSGKNASKRRKRRGRGQDIQETTRLQKLAVTTKRILMVVMLVAMLAAVSYYGYKGLLWLSDWMNEVEEQRQKSRRYPRI</sequence>
<protein>
    <recommendedName>
        <fullName>NF-X1-type zinc finger protein NFXL2</fullName>
        <shortName>AtNFXL2</shortName>
        <ecNumber>2.3.2.-</ecNumber>
    </recommendedName>
    <alternativeName>
        <fullName>Protein EARLY BIRD</fullName>
    </alternativeName>
</protein>
<keyword id="KW-0025">Alternative splicing</keyword>
<keyword id="KW-0090">Biological rhythms</keyword>
<keyword id="KW-0472">Membrane</keyword>
<keyword id="KW-0479">Metal-binding</keyword>
<keyword id="KW-0539">Nucleus</keyword>
<keyword id="KW-1185">Reference proteome</keyword>
<keyword id="KW-0677">Repeat</keyword>
<keyword id="KW-0808">Transferase</keyword>
<keyword id="KW-0812">Transmembrane</keyword>
<keyword id="KW-1133">Transmembrane helix</keyword>
<keyword id="KW-0833">Ubl conjugation pathway</keyword>
<keyword id="KW-0862">Zinc</keyword>
<keyword id="KW-0863">Zinc-finger</keyword>
<comment type="function">
    <text evidence="4 5 6 7 8">Probable transcriptional regulator. May mediate E2- or E3-dependent ubiquitination. Required to gate light sensitivity during the night. Regulates the speed of the clock by acting in the feedback loop between CCA1, LHY and APRR1/TOC1. Promotes the expression of CCA1 at night but not by days. This activational effect is enhanced by interaction with ADO1/ZTL. Association with ADO1/ZTL is not leading to the degradation of NFXL2. Confers sensitivity to osmotic stress such as high salinity. Prevents H(2)O(2) production and abscisic acid accumulation. Part of a regulatory network that integrates the biosynthesis and action of abscisic acid, reactive oxygen species and cuticle components.</text>
</comment>
<comment type="pathway">
    <text>Protein modification; protein ubiquitination.</text>
</comment>
<comment type="subunit">
    <text evidence="5">Interacts with ADO1/ZTL.</text>
</comment>
<comment type="subcellular location">
    <subcellularLocation>
        <location evidence="7">Nucleus</location>
    </subcellularLocation>
    <subcellularLocation>
        <location evidence="10">Membrane</location>
        <topology evidence="10">Single-pass membrane protein</topology>
    </subcellularLocation>
</comment>
<comment type="alternative products">
    <event type="alternative splicing"/>
    <isoform>
        <id>Q9FFK8-1</id>
        <name>NFXL2-97</name>
        <sequence type="displayed"/>
    </isoform>
    <isoform>
        <id>Q9FFK8-2</id>
        <name>NFXL2-100</name>
        <sequence type="described" ref="VSP_046012"/>
    </isoform>
    <isoform>
        <id>Q9FFK8-3</id>
        <name>NFXL2-78</name>
        <sequence type="described" ref="VSP_046010 VSP_046011"/>
    </isoform>
    <text>Additional isoforms seem to exist.</text>
</comment>
<comment type="tissue specificity">
    <text evidence="7">Constitutively expressed in mesophyll and guard cells.</text>
</comment>
<comment type="induction">
    <text evidence="5 7">Circadian-regulation with a peak of expression at or before dawn. Not regulated by biotic and abiotic stresses, by light and nutrient conditions or upon treatment with elicitors, chemicals, abscisic acid or phytohormones.</text>
</comment>
<comment type="domain">
    <text evidence="1">The RING-type zinc finger domain interacts with an ubiquitin-conjugating enzyme (E2) and facilitates ubiquitination.</text>
</comment>
<comment type="disruption phenotype">
    <text evidence="4 7">No obvious morphological alterations. Enhanced growth and survival under water or salt stress. Enhanced H(2)O(2) production. Elevated abscisic acid levels and reduced stomatal aperture.</text>
</comment>
<comment type="similarity">
    <text evidence="10">Belongs to the NFX1 family.</text>
</comment>
<comment type="sequence caution" evidence="10">
    <conflict type="frameshift">
        <sequence resource="EMBL" id="AK228690"/>
    </conflict>
</comment>
<comment type="sequence caution" evidence="10">
    <conflict type="erroneous gene model prediction">
        <sequence resource="EMBL-CDS" id="BAB09660"/>
    </conflict>
</comment>
<evidence type="ECO:0000250" key="1"/>
<evidence type="ECO:0000255" key="2"/>
<evidence type="ECO:0000256" key="3">
    <source>
        <dbReference type="SAM" id="MobiDB-lite"/>
    </source>
</evidence>
<evidence type="ECO:0000269" key="4">
    <source>
    </source>
</evidence>
<evidence type="ECO:0000269" key="5">
    <source>
    </source>
</evidence>
<evidence type="ECO:0000269" key="6">
    <source>
    </source>
</evidence>
<evidence type="ECO:0000269" key="7">
    <source>
    </source>
</evidence>
<evidence type="ECO:0000269" key="8">
    <source>
    </source>
</evidence>
<evidence type="ECO:0000303" key="9">
    <source>
    </source>
</evidence>
<evidence type="ECO:0000305" key="10"/>
<organism>
    <name type="scientific">Arabidopsis thaliana</name>
    <name type="common">Mouse-ear cress</name>
    <dbReference type="NCBI Taxonomy" id="3702"/>
    <lineage>
        <taxon>Eukaryota</taxon>
        <taxon>Viridiplantae</taxon>
        <taxon>Streptophyta</taxon>
        <taxon>Embryophyta</taxon>
        <taxon>Tracheophyta</taxon>
        <taxon>Spermatophyta</taxon>
        <taxon>Magnoliopsida</taxon>
        <taxon>eudicotyledons</taxon>
        <taxon>Gunneridae</taxon>
        <taxon>Pentapetalae</taxon>
        <taxon>rosids</taxon>
        <taxon>malvids</taxon>
        <taxon>Brassicales</taxon>
        <taxon>Brassicaceae</taxon>
        <taxon>Camelineae</taxon>
        <taxon>Arabidopsis</taxon>
    </lineage>
</organism>
<feature type="chain" id="PRO_0000396836" description="NF-X1-type zinc finger protein NFXL2">
    <location>
        <begin position="1"/>
        <end position="883"/>
    </location>
</feature>
<feature type="transmembrane region" description="Helical" evidence="2">
    <location>
        <begin position="841"/>
        <end position="863"/>
    </location>
</feature>
<feature type="zinc finger region" description="RING-type; degenerate">
    <location>
        <begin position="87"/>
        <end position="152"/>
    </location>
</feature>
<feature type="zinc finger region" description="NF-X1-type 1">
    <location>
        <begin position="198"/>
        <end position="216"/>
    </location>
</feature>
<feature type="zinc finger region" description="NF-X1-type 2">
    <location>
        <begin position="250"/>
        <end position="269"/>
    </location>
</feature>
<feature type="zinc finger region" description="NF-X1-type 3">
    <location>
        <begin position="303"/>
        <end position="322"/>
    </location>
</feature>
<feature type="zinc finger region" description="NF-X1-type 4">
    <location>
        <begin position="357"/>
        <end position="377"/>
    </location>
</feature>
<feature type="zinc finger region" description="NF-X1-type 5">
    <location>
        <begin position="410"/>
        <end position="429"/>
    </location>
</feature>
<feature type="zinc finger region" description="NF-X1-type 6">
    <location>
        <begin position="437"/>
        <end position="456"/>
    </location>
</feature>
<feature type="zinc finger region" description="NF-X1-type 7">
    <location>
        <begin position="494"/>
        <end position="515"/>
    </location>
</feature>
<feature type="zinc finger region" description="NF-X1-type 8">
    <location>
        <begin position="523"/>
        <end position="568"/>
    </location>
</feature>
<feature type="zinc finger region" description="NF-X1-type 9">
    <location>
        <begin position="605"/>
        <end position="636"/>
    </location>
</feature>
<feature type="zinc finger region" description="NF-X1-type 10">
    <location>
        <begin position="646"/>
        <end position="664"/>
    </location>
</feature>
<feature type="zinc finger region" description="NF-X1-type 11">
    <location>
        <begin position="709"/>
        <end position="738"/>
    </location>
</feature>
<feature type="region of interest" description="Disordered" evidence="3">
    <location>
        <begin position="1"/>
        <end position="44"/>
    </location>
</feature>
<feature type="region of interest" description="Disordered" evidence="3">
    <location>
        <begin position="798"/>
        <end position="824"/>
    </location>
</feature>
<feature type="compositionally biased region" description="Polar residues" evidence="3">
    <location>
        <begin position="1"/>
        <end position="10"/>
    </location>
</feature>
<feature type="splice variant" id="VSP_046010" description="In isoform NFXL2-78." evidence="9">
    <original>CRGPCHRKLPNCTHLCP</original>
    <variation>SLVIPTVRANYRWLNRC</variation>
    <location>
        <begin position="698"/>
        <end position="714"/>
    </location>
</feature>
<feature type="splice variant" id="VSP_046011" description="In isoform NFXL2-78." evidence="9">
    <location>
        <begin position="715"/>
        <end position="883"/>
    </location>
</feature>
<feature type="splice variant" id="VSP_046012" description="In isoform NFXL2-100." evidence="9">
    <original>K</original>
    <variation>KKVSICQFISIWDAVSVTSEILLVSILSWI</variation>
    <location>
        <position position="730"/>
    </location>
</feature>
<feature type="mutagenesis site" description="In ebi-1; altered circadian clock function." evidence="6">
    <original>V</original>
    <variation>I</variation>
    <location>
        <position position="354"/>
    </location>
</feature>
<feature type="sequence conflict" description="In Ref. 1; no nucleotide entry." evidence="10" ref="1">
    <original>R</original>
    <variation>H</variation>
    <location>
        <position position="270"/>
    </location>
</feature>
<feature type="sequence conflict" description="In Ref. 4; AK228690." evidence="10" ref="4">
    <original>E</original>
    <variation>G</variation>
    <location>
        <position position="466"/>
    </location>
</feature>
<feature type="sequence conflict" description="In Ref. 1; no nucleotide entry." evidence="10" ref="1">
    <original>H</original>
    <variation>N</variation>
    <location>
        <position position="552"/>
    </location>
</feature>
<feature type="sequence conflict" description="In Ref. 1; no nucleotide entry." evidence="10" ref="1">
    <original>P</original>
    <variation>L</variation>
    <location>
        <position position="660"/>
    </location>
</feature>